<accession>Q9AQT2</accession>
<evidence type="ECO:0000255" key="1">
    <source>
        <dbReference type="HAMAP-Rule" id="MF_00822"/>
    </source>
</evidence>
<evidence type="ECO:0000256" key="2">
    <source>
        <dbReference type="SAM" id="MobiDB-lite"/>
    </source>
</evidence>
<protein>
    <recommendedName>
        <fullName evidence="1">Urease accessory protein UreE</fullName>
    </recommendedName>
</protein>
<organism>
    <name type="scientific">Rhodobacter capsulatus</name>
    <name type="common">Rhodopseudomonas capsulata</name>
    <dbReference type="NCBI Taxonomy" id="1061"/>
    <lineage>
        <taxon>Bacteria</taxon>
        <taxon>Pseudomonadati</taxon>
        <taxon>Pseudomonadota</taxon>
        <taxon>Alphaproteobacteria</taxon>
        <taxon>Rhodobacterales</taxon>
        <taxon>Rhodobacter group</taxon>
        <taxon>Rhodobacter</taxon>
    </lineage>
</organism>
<name>UREE_RHOCA</name>
<dbReference type="EMBL" id="AB006984">
    <property type="protein sequence ID" value="BAB21069.1"/>
    <property type="molecule type" value="Genomic_DNA"/>
</dbReference>
<dbReference type="RefSeq" id="WP_013066958.1">
    <property type="nucleotide sequence ID" value="NZ_JAOTPJ010000024.1"/>
</dbReference>
<dbReference type="SMR" id="Q9AQT2"/>
<dbReference type="OMA" id="QVFDEHH"/>
<dbReference type="GO" id="GO:0005737">
    <property type="term" value="C:cytoplasm"/>
    <property type="evidence" value="ECO:0007669"/>
    <property type="project" value="UniProtKB-SubCell"/>
</dbReference>
<dbReference type="GO" id="GO:0016151">
    <property type="term" value="F:nickel cation binding"/>
    <property type="evidence" value="ECO:0007669"/>
    <property type="project" value="UniProtKB-UniRule"/>
</dbReference>
<dbReference type="GO" id="GO:0051082">
    <property type="term" value="F:unfolded protein binding"/>
    <property type="evidence" value="ECO:0007669"/>
    <property type="project" value="UniProtKB-UniRule"/>
</dbReference>
<dbReference type="GO" id="GO:0006457">
    <property type="term" value="P:protein folding"/>
    <property type="evidence" value="ECO:0007669"/>
    <property type="project" value="InterPro"/>
</dbReference>
<dbReference type="GO" id="GO:0065003">
    <property type="term" value="P:protein-containing complex assembly"/>
    <property type="evidence" value="ECO:0007669"/>
    <property type="project" value="InterPro"/>
</dbReference>
<dbReference type="GO" id="GO:0019627">
    <property type="term" value="P:urea metabolic process"/>
    <property type="evidence" value="ECO:0007669"/>
    <property type="project" value="InterPro"/>
</dbReference>
<dbReference type="CDD" id="cd00571">
    <property type="entry name" value="UreE"/>
    <property type="match status" value="1"/>
</dbReference>
<dbReference type="Gene3D" id="2.60.260.20">
    <property type="entry name" value="Urease metallochaperone UreE, N-terminal domain"/>
    <property type="match status" value="1"/>
</dbReference>
<dbReference type="Gene3D" id="3.30.70.790">
    <property type="entry name" value="UreE, C-terminal domain"/>
    <property type="match status" value="1"/>
</dbReference>
<dbReference type="HAMAP" id="MF_00822">
    <property type="entry name" value="UreE"/>
    <property type="match status" value="1"/>
</dbReference>
<dbReference type="InterPro" id="IPR012406">
    <property type="entry name" value="UreE"/>
</dbReference>
<dbReference type="InterPro" id="IPR007864">
    <property type="entry name" value="UreE_C_dom"/>
</dbReference>
<dbReference type="InterPro" id="IPR004029">
    <property type="entry name" value="UreE_N"/>
</dbReference>
<dbReference type="InterPro" id="IPR036118">
    <property type="entry name" value="UreE_N_sf"/>
</dbReference>
<dbReference type="Pfam" id="PF05194">
    <property type="entry name" value="UreE_C"/>
    <property type="match status" value="1"/>
</dbReference>
<dbReference type="Pfam" id="PF02814">
    <property type="entry name" value="UreE_N"/>
    <property type="match status" value="1"/>
</dbReference>
<dbReference type="PIRSF" id="PIRSF036402">
    <property type="entry name" value="Ureas_acces_UreE"/>
    <property type="match status" value="1"/>
</dbReference>
<dbReference type="SMART" id="SM00988">
    <property type="entry name" value="UreE_N"/>
    <property type="match status" value="1"/>
</dbReference>
<dbReference type="SUPFAM" id="SSF69737">
    <property type="entry name" value="Urease metallochaperone UreE, C-terminal domain"/>
    <property type="match status" value="1"/>
</dbReference>
<dbReference type="SUPFAM" id="SSF69287">
    <property type="entry name" value="Urease metallochaperone UreE, N-terminal domain"/>
    <property type="match status" value="1"/>
</dbReference>
<gene>
    <name evidence="1" type="primary">ureE</name>
</gene>
<proteinExistence type="inferred from homology"/>
<feature type="chain" id="PRO_0000223434" description="Urease accessory protein UreE">
    <location>
        <begin position="1"/>
        <end position="156"/>
    </location>
</feature>
<feature type="region of interest" description="Disordered" evidence="2">
    <location>
        <begin position="133"/>
        <end position="156"/>
    </location>
</feature>
<feature type="compositionally biased region" description="Basic and acidic residues" evidence="2">
    <location>
        <begin position="145"/>
        <end position="156"/>
    </location>
</feature>
<keyword id="KW-0143">Chaperone</keyword>
<keyword id="KW-0963">Cytoplasm</keyword>
<keyword id="KW-0533">Nickel</keyword>
<keyword id="KW-0996">Nickel insertion</keyword>
<comment type="function">
    <text evidence="1">Involved in urease metallocenter assembly. Binds nickel. Probably functions as a nickel donor during metallocenter assembly.</text>
</comment>
<comment type="subcellular location">
    <subcellularLocation>
        <location evidence="1">Cytoplasm</location>
    </subcellularLocation>
</comment>
<comment type="similarity">
    <text evidence="1">Belongs to the UreE family.</text>
</comment>
<reference key="1">
    <citation type="submission" date="1997-09" db="EMBL/GenBank/DDBJ databases">
        <title>Cloning and sequencing of urease gene cluster from a photosynthetic bacterium, Rhodobacter capsulatus.</title>
        <authorList>
            <person name="Kataoka K."/>
            <person name="Matsuura K."/>
            <person name="Kitamura M."/>
            <person name="Yamaguchi K."/>
            <person name="Takakuwa S."/>
            <person name="Suzuki S."/>
        </authorList>
    </citation>
    <scope>NUCLEOTIDE SEQUENCE [GENOMIC DNA]</scope>
    <source>
        <strain>ATCC 33303 / B10</strain>
    </source>
</reference>
<sequence length="156" mass="17321">MSLMHRASRVLPAGGWSGAADHIALDYEARFLRRKRLVAASGAEFLVDLPEVTNLRGGEAFALEDGRLIEVRCGLEPVLVVTGDLTRLAWHVGNRHTPCQIEPDRLLIRDDHVLETMLRGLGARVERRMEPFRPESGAYGSGRTMGHDHGPFHVHA</sequence>